<comment type="similarity">
    <text evidence="1">Belongs to the UPF0125 (RnfH) family.</text>
</comment>
<dbReference type="EMBL" id="CP000744">
    <property type="protein sequence ID" value="ABR83428.1"/>
    <property type="molecule type" value="Genomic_DNA"/>
</dbReference>
<dbReference type="RefSeq" id="WP_012077499.1">
    <property type="nucleotide sequence ID" value="NC_009656.1"/>
</dbReference>
<dbReference type="SMR" id="A6VCM3"/>
<dbReference type="KEGG" id="pap:PSPA7_5486"/>
<dbReference type="HOGENOM" id="CLU_150721_1_0_6"/>
<dbReference type="Proteomes" id="UP000001582">
    <property type="component" value="Chromosome"/>
</dbReference>
<dbReference type="Gene3D" id="3.10.20.280">
    <property type="entry name" value="RnfH-like"/>
    <property type="match status" value="1"/>
</dbReference>
<dbReference type="HAMAP" id="MF_00460">
    <property type="entry name" value="UPF0125_RnfH"/>
    <property type="match status" value="1"/>
</dbReference>
<dbReference type="InterPro" id="IPR016155">
    <property type="entry name" value="Mopterin_synth/thiamin_S_b"/>
</dbReference>
<dbReference type="InterPro" id="IPR005346">
    <property type="entry name" value="RnfH"/>
</dbReference>
<dbReference type="InterPro" id="IPR037021">
    <property type="entry name" value="RnfH_sf"/>
</dbReference>
<dbReference type="NCBIfam" id="NF002490">
    <property type="entry name" value="PRK01777.1"/>
    <property type="match status" value="1"/>
</dbReference>
<dbReference type="PANTHER" id="PTHR37483">
    <property type="entry name" value="UPF0125 PROTEIN RATB"/>
    <property type="match status" value="1"/>
</dbReference>
<dbReference type="PANTHER" id="PTHR37483:SF1">
    <property type="entry name" value="UPF0125 PROTEIN RATB"/>
    <property type="match status" value="1"/>
</dbReference>
<dbReference type="Pfam" id="PF03658">
    <property type="entry name" value="Ub-RnfH"/>
    <property type="match status" value="1"/>
</dbReference>
<dbReference type="SUPFAM" id="SSF54285">
    <property type="entry name" value="MoaD/ThiS"/>
    <property type="match status" value="1"/>
</dbReference>
<sequence length="100" mass="10989">MAEIAVEVVYALPERQALLRLSVPAGTSAREAVRLSGIAEVFPELDIHCCPLGIFGKALANPEERPLEAGERVEIYRPLIADPKEVRKQRAARARAERGD</sequence>
<organism>
    <name type="scientific">Pseudomonas paraeruginosa (strain DSM 24068 / PA7)</name>
    <name type="common">Pseudomonas aeruginosa (strain PA7)</name>
    <dbReference type="NCBI Taxonomy" id="381754"/>
    <lineage>
        <taxon>Bacteria</taxon>
        <taxon>Pseudomonadati</taxon>
        <taxon>Pseudomonadota</taxon>
        <taxon>Gammaproteobacteria</taxon>
        <taxon>Pseudomonadales</taxon>
        <taxon>Pseudomonadaceae</taxon>
        <taxon>Pseudomonas</taxon>
        <taxon>Pseudomonas paraeruginosa</taxon>
    </lineage>
</organism>
<proteinExistence type="inferred from homology"/>
<gene>
    <name evidence="1" type="primary">rnfH</name>
    <name type="ordered locus">PSPA7_5486</name>
</gene>
<accession>A6VCM3</accession>
<feature type="chain" id="PRO_1000060334" description="Protein RnfH">
    <location>
        <begin position="1"/>
        <end position="100"/>
    </location>
</feature>
<reference key="1">
    <citation type="submission" date="2007-06" db="EMBL/GenBank/DDBJ databases">
        <authorList>
            <person name="Dodson R.J."/>
            <person name="Harkins D."/>
            <person name="Paulsen I.T."/>
        </authorList>
    </citation>
    <scope>NUCLEOTIDE SEQUENCE [LARGE SCALE GENOMIC DNA]</scope>
    <source>
        <strain>DSM 24068 / PA7</strain>
    </source>
</reference>
<protein>
    <recommendedName>
        <fullName evidence="1">Protein RnfH</fullName>
    </recommendedName>
</protein>
<name>RNFH_PSEP7</name>
<evidence type="ECO:0000255" key="1">
    <source>
        <dbReference type="HAMAP-Rule" id="MF_00460"/>
    </source>
</evidence>